<name>FADI_SHIF8</name>
<protein>
    <recommendedName>
        <fullName evidence="1">3-ketoacyl-CoA thiolase</fullName>
        <ecNumber evidence="1">2.3.1.16</ecNumber>
    </recommendedName>
    <alternativeName>
        <fullName evidence="1">ACSs</fullName>
    </alternativeName>
    <alternativeName>
        <fullName evidence="1">Acetyl-CoA acyltransferase</fullName>
    </alternativeName>
    <alternativeName>
        <fullName evidence="1">Acyl-CoA ligase</fullName>
    </alternativeName>
    <alternativeName>
        <fullName evidence="1">Beta-ketothiolase</fullName>
    </alternativeName>
    <alternativeName>
        <fullName evidence="1">Fatty acid oxidation complex subunit beta</fullName>
    </alternativeName>
</protein>
<reference key="1">
    <citation type="journal article" date="2006" name="BMC Genomics">
        <title>Complete genome sequence of Shigella flexneri 5b and comparison with Shigella flexneri 2a.</title>
        <authorList>
            <person name="Nie H."/>
            <person name="Yang F."/>
            <person name="Zhang X."/>
            <person name="Yang J."/>
            <person name="Chen L."/>
            <person name="Wang J."/>
            <person name="Xiong Z."/>
            <person name="Peng J."/>
            <person name="Sun L."/>
            <person name="Dong J."/>
            <person name="Xue Y."/>
            <person name="Xu X."/>
            <person name="Chen S."/>
            <person name="Yao Z."/>
            <person name="Shen Y."/>
            <person name="Jin Q."/>
        </authorList>
    </citation>
    <scope>NUCLEOTIDE SEQUENCE [LARGE SCALE GENOMIC DNA]</scope>
    <source>
        <strain>8401</strain>
    </source>
</reference>
<proteinExistence type="inferred from homology"/>
<keyword id="KW-0012">Acyltransferase</keyword>
<keyword id="KW-0963">Cytoplasm</keyword>
<keyword id="KW-0276">Fatty acid metabolism</keyword>
<keyword id="KW-0442">Lipid degradation</keyword>
<keyword id="KW-0443">Lipid metabolism</keyword>
<keyword id="KW-0808">Transferase</keyword>
<gene>
    <name evidence="1" type="primary">fadI</name>
    <name type="ordered locus">SFV_2410</name>
</gene>
<organism>
    <name type="scientific">Shigella flexneri serotype 5b (strain 8401)</name>
    <dbReference type="NCBI Taxonomy" id="373384"/>
    <lineage>
        <taxon>Bacteria</taxon>
        <taxon>Pseudomonadati</taxon>
        <taxon>Pseudomonadota</taxon>
        <taxon>Gammaproteobacteria</taxon>
        <taxon>Enterobacterales</taxon>
        <taxon>Enterobacteriaceae</taxon>
        <taxon>Shigella</taxon>
    </lineage>
</organism>
<comment type="function">
    <text evidence="1">Catalyzes the final step of fatty acid oxidation in which acetyl-CoA is released and the CoA ester of a fatty acid two carbons shorter is formed.</text>
</comment>
<comment type="catalytic activity">
    <reaction evidence="1">
        <text>an acyl-CoA + acetyl-CoA = a 3-oxoacyl-CoA + CoA</text>
        <dbReference type="Rhea" id="RHEA:21564"/>
        <dbReference type="ChEBI" id="CHEBI:57287"/>
        <dbReference type="ChEBI" id="CHEBI:57288"/>
        <dbReference type="ChEBI" id="CHEBI:58342"/>
        <dbReference type="ChEBI" id="CHEBI:90726"/>
        <dbReference type="EC" id="2.3.1.16"/>
    </reaction>
</comment>
<comment type="pathway">
    <text evidence="1">Lipid metabolism; fatty acid beta-oxidation.</text>
</comment>
<comment type="subunit">
    <text evidence="1">Heterotetramer of two alpha chains (FadJ) and two beta chains (FadI).</text>
</comment>
<comment type="subcellular location">
    <subcellularLocation>
        <location evidence="1">Cytoplasm</location>
    </subcellularLocation>
</comment>
<comment type="similarity">
    <text evidence="1">Belongs to the thiolase-like superfamily. Thiolase family.</text>
</comment>
<accession>Q0T2E5</accession>
<feature type="chain" id="PRO_1000069519" description="3-ketoacyl-CoA thiolase">
    <location>
        <begin position="1"/>
        <end position="436"/>
    </location>
</feature>
<feature type="active site" description="Acyl-thioester intermediate" evidence="1">
    <location>
        <position position="99"/>
    </location>
</feature>
<feature type="active site" description="Proton acceptor" evidence="1">
    <location>
        <position position="392"/>
    </location>
</feature>
<feature type="active site" description="Proton acceptor" evidence="1">
    <location>
        <position position="422"/>
    </location>
</feature>
<evidence type="ECO:0000255" key="1">
    <source>
        <dbReference type="HAMAP-Rule" id="MF_01618"/>
    </source>
</evidence>
<sequence>MGQVLPLVTRQGDRIAIVSGLRTPFARQATAFHGIPAVDLGKMVVGELLARSEIPAEVIEQLVFGQVVQMPEAPNIAREIVLGTGMNVHTDAYSVSRACATSFQAVANVAESLMAGTIRAGIAGGADSSSVLPIGVSKKLAHVLVDVNKARTMSQRLKLFSRLRLRDLMPVPPAVAEYSTGLRMGDTAEQMAKTYGITREQQDALAHRSHQRAAQAWSDGKLKEEVMTAFIPPYKQPLVEDNNIRGNSSLADYAKLRPAFDRKHGTVTAANSTPLTDGAAAVILMTESRAKELGLVPLGYLRSYAFTAIDVWQDMLLGPARSTPLALERAGLTMSELTLIDMHEAFAAQTLANIQLLGSERFAREVLGRAHATGEVDDSKFNVLGGSIAYGHPFAATGARMITQTLHELRRRGGGFGLVTACAAGGLGAAMVLEAE</sequence>
<dbReference type="EC" id="2.3.1.16" evidence="1"/>
<dbReference type="EMBL" id="CP000266">
    <property type="protein sequence ID" value="ABF04520.1"/>
    <property type="molecule type" value="Genomic_DNA"/>
</dbReference>
<dbReference type="RefSeq" id="WP_000531927.1">
    <property type="nucleotide sequence ID" value="NC_008258.1"/>
</dbReference>
<dbReference type="SMR" id="Q0T2E5"/>
<dbReference type="KEGG" id="sfv:SFV_2410"/>
<dbReference type="HOGENOM" id="CLU_031026_2_0_6"/>
<dbReference type="UniPathway" id="UPA00659"/>
<dbReference type="Proteomes" id="UP000000659">
    <property type="component" value="Chromosome"/>
</dbReference>
<dbReference type="GO" id="GO:0005829">
    <property type="term" value="C:cytosol"/>
    <property type="evidence" value="ECO:0007669"/>
    <property type="project" value="TreeGrafter"/>
</dbReference>
<dbReference type="GO" id="GO:0003988">
    <property type="term" value="F:acetyl-CoA C-acyltransferase activity"/>
    <property type="evidence" value="ECO:0007669"/>
    <property type="project" value="UniProtKB-UniRule"/>
</dbReference>
<dbReference type="GO" id="GO:0006635">
    <property type="term" value="P:fatty acid beta-oxidation"/>
    <property type="evidence" value="ECO:0007669"/>
    <property type="project" value="UniProtKB-UniRule"/>
</dbReference>
<dbReference type="CDD" id="cd00751">
    <property type="entry name" value="thiolase"/>
    <property type="match status" value="1"/>
</dbReference>
<dbReference type="FunFam" id="3.40.47.10:FF:000011">
    <property type="entry name" value="3-ketoacyl-CoA thiolase"/>
    <property type="match status" value="1"/>
</dbReference>
<dbReference type="Gene3D" id="3.40.47.10">
    <property type="match status" value="1"/>
</dbReference>
<dbReference type="HAMAP" id="MF_01618">
    <property type="entry name" value="FadI"/>
    <property type="match status" value="1"/>
</dbReference>
<dbReference type="InterPro" id="IPR012806">
    <property type="entry name" value="Ac-CoA_C-AcTrfase_FadI"/>
</dbReference>
<dbReference type="InterPro" id="IPR002155">
    <property type="entry name" value="Thiolase"/>
</dbReference>
<dbReference type="InterPro" id="IPR016039">
    <property type="entry name" value="Thiolase-like"/>
</dbReference>
<dbReference type="InterPro" id="IPR020615">
    <property type="entry name" value="Thiolase_acyl_enz_int_AS"/>
</dbReference>
<dbReference type="InterPro" id="IPR020610">
    <property type="entry name" value="Thiolase_AS"/>
</dbReference>
<dbReference type="InterPro" id="IPR020617">
    <property type="entry name" value="Thiolase_C"/>
</dbReference>
<dbReference type="InterPro" id="IPR020613">
    <property type="entry name" value="Thiolase_CS"/>
</dbReference>
<dbReference type="InterPro" id="IPR020616">
    <property type="entry name" value="Thiolase_N"/>
</dbReference>
<dbReference type="NCBIfam" id="TIGR01930">
    <property type="entry name" value="AcCoA-C-Actrans"/>
    <property type="match status" value="1"/>
</dbReference>
<dbReference type="NCBIfam" id="TIGR02446">
    <property type="entry name" value="FadI"/>
    <property type="match status" value="1"/>
</dbReference>
<dbReference type="NCBIfam" id="NF006516">
    <property type="entry name" value="PRK08963.1"/>
    <property type="match status" value="1"/>
</dbReference>
<dbReference type="PANTHER" id="PTHR18919:SF107">
    <property type="entry name" value="ACETYL-COA ACETYLTRANSFERASE, CYTOSOLIC"/>
    <property type="match status" value="1"/>
</dbReference>
<dbReference type="PANTHER" id="PTHR18919">
    <property type="entry name" value="ACETYL-COA C-ACYLTRANSFERASE"/>
    <property type="match status" value="1"/>
</dbReference>
<dbReference type="Pfam" id="PF02803">
    <property type="entry name" value="Thiolase_C"/>
    <property type="match status" value="1"/>
</dbReference>
<dbReference type="Pfam" id="PF00108">
    <property type="entry name" value="Thiolase_N"/>
    <property type="match status" value="1"/>
</dbReference>
<dbReference type="PIRSF" id="PIRSF000429">
    <property type="entry name" value="Ac-CoA_Ac_transf"/>
    <property type="match status" value="1"/>
</dbReference>
<dbReference type="SUPFAM" id="SSF53901">
    <property type="entry name" value="Thiolase-like"/>
    <property type="match status" value="2"/>
</dbReference>
<dbReference type="PROSITE" id="PS00098">
    <property type="entry name" value="THIOLASE_1"/>
    <property type="match status" value="1"/>
</dbReference>
<dbReference type="PROSITE" id="PS00737">
    <property type="entry name" value="THIOLASE_2"/>
    <property type="match status" value="1"/>
</dbReference>
<dbReference type="PROSITE" id="PS00099">
    <property type="entry name" value="THIOLASE_3"/>
    <property type="match status" value="1"/>
</dbReference>